<gene>
    <name type="primary">KLF12</name>
    <name type="synonym">AP2REP</name>
    <name type="ORF">HSPC122</name>
</gene>
<proteinExistence type="evidence at protein level"/>
<accession>Q9Y4X4</accession>
<accession>A8K5T2</accession>
<accession>L0R3J4</accession>
<accession>Q5VZM7</accession>
<accession>Q9UHZ0</accession>
<keyword id="KW-0025">Alternative splicing</keyword>
<keyword id="KW-0238">DNA-binding</keyword>
<keyword id="KW-0479">Metal-binding</keyword>
<keyword id="KW-0488">Methylation</keyword>
<keyword id="KW-0539">Nucleus</keyword>
<keyword id="KW-0597">Phosphoprotein</keyword>
<keyword id="KW-1267">Proteomics identification</keyword>
<keyword id="KW-1185">Reference proteome</keyword>
<keyword id="KW-0677">Repeat</keyword>
<keyword id="KW-0678">Repressor</keyword>
<keyword id="KW-0804">Transcription</keyword>
<keyword id="KW-0805">Transcription regulation</keyword>
<keyword id="KW-0862">Zinc</keyword>
<keyword id="KW-0863">Zinc-finger</keyword>
<evidence type="ECO:0000255" key="1">
    <source>
        <dbReference type="PROSITE-ProRule" id="PRU00042"/>
    </source>
</evidence>
<evidence type="ECO:0000256" key="2">
    <source>
        <dbReference type="SAM" id="MobiDB-lite"/>
    </source>
</evidence>
<evidence type="ECO:0000269" key="3">
    <source>
    </source>
</evidence>
<evidence type="ECO:0000269" key="4">
    <source>
    </source>
</evidence>
<evidence type="ECO:0000303" key="5">
    <source>
    </source>
</evidence>
<evidence type="ECO:0000303" key="6">
    <source>
    </source>
</evidence>
<evidence type="ECO:0000303" key="7">
    <source ref="4"/>
</evidence>
<evidence type="ECO:0000305" key="8"/>
<evidence type="ECO:0007744" key="9">
    <source>
    </source>
</evidence>
<evidence type="ECO:0007744" key="10">
    <source>
    </source>
</evidence>
<protein>
    <recommendedName>
        <fullName>Krueppel-like factor 12</fullName>
    </recommendedName>
    <alternativeName>
        <fullName>Transcriptional repressor AP-2rep</fullName>
    </alternativeName>
</protein>
<dbReference type="EMBL" id="AJ243274">
    <property type="protein sequence ID" value="CAB46982.1"/>
    <property type="molecule type" value="mRNA"/>
</dbReference>
<dbReference type="EMBL" id="AF312872">
    <property type="protein sequence ID" value="AAK12082.1"/>
    <property type="molecule type" value="Genomic_DNA"/>
</dbReference>
<dbReference type="EMBL" id="AF312866">
    <property type="protein sequence ID" value="AAK12082.1"/>
    <property type="status" value="JOINED"/>
    <property type="molecule type" value="Genomic_DNA"/>
</dbReference>
<dbReference type="EMBL" id="AF312867">
    <property type="protein sequence ID" value="AAK12082.1"/>
    <property type="status" value="JOINED"/>
    <property type="molecule type" value="Genomic_DNA"/>
</dbReference>
<dbReference type="EMBL" id="AF312868">
    <property type="protein sequence ID" value="AAK12082.1"/>
    <property type="status" value="JOINED"/>
    <property type="molecule type" value="Genomic_DNA"/>
</dbReference>
<dbReference type="EMBL" id="AF312869">
    <property type="protein sequence ID" value="AAK12082.1"/>
    <property type="status" value="JOINED"/>
    <property type="molecule type" value="Genomic_DNA"/>
</dbReference>
<dbReference type="EMBL" id="AF312870">
    <property type="protein sequence ID" value="AAK12082.1"/>
    <property type="status" value="JOINED"/>
    <property type="molecule type" value="Genomic_DNA"/>
</dbReference>
<dbReference type="EMBL" id="AF312871">
    <property type="protein sequence ID" value="AAK12082.1"/>
    <property type="status" value="JOINED"/>
    <property type="molecule type" value="Genomic_DNA"/>
</dbReference>
<dbReference type="EMBL" id="HF546212">
    <property type="protein sequence ID" value="CCO02798.1"/>
    <property type="molecule type" value="mRNA"/>
</dbReference>
<dbReference type="EMBL" id="AF113122">
    <property type="protein sequence ID" value="AAF14863.1"/>
    <property type="molecule type" value="mRNA"/>
</dbReference>
<dbReference type="EMBL" id="AF161471">
    <property type="protein sequence ID" value="AAF29086.1"/>
    <property type="molecule type" value="mRNA"/>
</dbReference>
<dbReference type="EMBL" id="AK291397">
    <property type="protein sequence ID" value="BAF84086.1"/>
    <property type="molecule type" value="mRNA"/>
</dbReference>
<dbReference type="EMBL" id="AL138713">
    <property type="status" value="NOT_ANNOTATED_CDS"/>
    <property type="molecule type" value="Genomic_DNA"/>
</dbReference>
<dbReference type="EMBL" id="AL139036">
    <property type="status" value="NOT_ANNOTATED_CDS"/>
    <property type="molecule type" value="Genomic_DNA"/>
</dbReference>
<dbReference type="EMBL" id="AL159972">
    <property type="status" value="NOT_ANNOTATED_CDS"/>
    <property type="molecule type" value="Genomic_DNA"/>
</dbReference>
<dbReference type="EMBL" id="AL160032">
    <property type="status" value="NOT_ANNOTATED_CDS"/>
    <property type="molecule type" value="Genomic_DNA"/>
</dbReference>
<dbReference type="EMBL" id="CH471093">
    <property type="protein sequence ID" value="EAW80529.1"/>
    <property type="molecule type" value="Genomic_DNA"/>
</dbReference>
<dbReference type="EMBL" id="BC019680">
    <property type="protein sequence ID" value="AAH19680.1"/>
    <property type="molecule type" value="mRNA"/>
</dbReference>
<dbReference type="CCDS" id="CCDS9449.1">
    <molecule id="Q9Y4X4-1"/>
</dbReference>
<dbReference type="RefSeq" id="NP_001387065.1">
    <molecule id="Q9Y4X4-1"/>
    <property type="nucleotide sequence ID" value="NM_001400136.1"/>
</dbReference>
<dbReference type="RefSeq" id="NP_001387068.1">
    <molecule id="Q9Y4X4-1"/>
    <property type="nucleotide sequence ID" value="NM_001400139.1"/>
</dbReference>
<dbReference type="RefSeq" id="NP_001387070.1">
    <molecule id="Q9Y4X4-1"/>
    <property type="nucleotide sequence ID" value="NM_001400141.1"/>
</dbReference>
<dbReference type="RefSeq" id="NP_001387081.1">
    <molecule id="Q9Y4X4-3"/>
    <property type="nucleotide sequence ID" value="NM_001400152.1"/>
</dbReference>
<dbReference type="RefSeq" id="NP_001387082.1">
    <molecule id="Q9Y4X4-3"/>
    <property type="nucleotide sequence ID" value="NM_001400153.1"/>
</dbReference>
<dbReference type="RefSeq" id="NP_009180.3">
    <molecule id="Q9Y4X4-1"/>
    <property type="nucleotide sequence ID" value="NM_007249.4"/>
</dbReference>
<dbReference type="RefSeq" id="XP_005266308.1">
    <property type="nucleotide sequence ID" value="XM_005266251.3"/>
</dbReference>
<dbReference type="RefSeq" id="XP_011533211.1">
    <molecule id="Q9Y4X4-1"/>
    <property type="nucleotide sequence ID" value="XM_011534909.3"/>
</dbReference>
<dbReference type="RefSeq" id="XP_054230060.1">
    <molecule id="Q9Y4X4-1"/>
    <property type="nucleotide sequence ID" value="XM_054374085.1"/>
</dbReference>
<dbReference type="SMR" id="Q9Y4X4"/>
<dbReference type="BioGRID" id="116434">
    <property type="interactions" value="187"/>
</dbReference>
<dbReference type="FunCoup" id="Q9Y4X4">
    <property type="interactions" value="189"/>
</dbReference>
<dbReference type="IntAct" id="Q9Y4X4">
    <property type="interactions" value="185"/>
</dbReference>
<dbReference type="STRING" id="9606.ENSP00000366897"/>
<dbReference type="GlyGen" id="Q9Y4X4">
    <property type="glycosylation" value="2 sites, 1 N-linked glycan (1 site), 1 O-linked glycan (1 site)"/>
</dbReference>
<dbReference type="iPTMnet" id="Q9Y4X4"/>
<dbReference type="PhosphoSitePlus" id="Q9Y4X4"/>
<dbReference type="BioMuta" id="KLF12"/>
<dbReference type="DMDM" id="91771555"/>
<dbReference type="jPOST" id="Q9Y4X4"/>
<dbReference type="MassIVE" id="Q9Y4X4"/>
<dbReference type="PaxDb" id="9606-ENSP00000366897"/>
<dbReference type="PeptideAtlas" id="Q9Y4X4"/>
<dbReference type="ProteomicsDB" id="86262">
    <molecule id="Q9Y4X4-1"/>
</dbReference>
<dbReference type="ProteomicsDB" id="86263">
    <molecule id="Q9Y4X4-2"/>
</dbReference>
<dbReference type="Pumba" id="Q9Y4X4"/>
<dbReference type="Antibodypedia" id="24434">
    <property type="antibodies" value="289 antibodies from 30 providers"/>
</dbReference>
<dbReference type="DNASU" id="11278"/>
<dbReference type="Ensembl" id="ENST00000377669.7">
    <molecule id="Q9Y4X4-1"/>
    <property type="protein sequence ID" value="ENSP00000366897.2"/>
    <property type="gene ID" value="ENSG00000118922.19"/>
</dbReference>
<dbReference type="Ensembl" id="ENST00000703967.1">
    <molecule id="Q9Y4X4-1"/>
    <property type="protein sequence ID" value="ENSP00000515592.1"/>
    <property type="gene ID" value="ENSG00000118922.19"/>
</dbReference>
<dbReference type="GeneID" id="11278"/>
<dbReference type="KEGG" id="hsa:11278"/>
<dbReference type="MANE-Select" id="ENST00000703967.1">
    <property type="protein sequence ID" value="ENSP00000515592.1"/>
    <property type="RefSeq nucleotide sequence ID" value="NM_001400136.1"/>
    <property type="RefSeq protein sequence ID" value="NP_001387065.1"/>
</dbReference>
<dbReference type="UCSC" id="uc058xlm.1">
    <molecule id="Q9Y4X4-1"/>
    <property type="organism name" value="human"/>
</dbReference>
<dbReference type="AGR" id="HGNC:6346"/>
<dbReference type="CTD" id="11278"/>
<dbReference type="DisGeNET" id="11278"/>
<dbReference type="GeneCards" id="KLF12"/>
<dbReference type="HGNC" id="HGNC:6346">
    <property type="gene designation" value="KLF12"/>
</dbReference>
<dbReference type="HPA" id="ENSG00000118922">
    <property type="expression patterns" value="Low tissue specificity"/>
</dbReference>
<dbReference type="MIM" id="607531">
    <property type="type" value="gene"/>
</dbReference>
<dbReference type="neXtProt" id="NX_Q9Y4X4"/>
<dbReference type="OpenTargets" id="ENSG00000118922"/>
<dbReference type="PharmGKB" id="PA30132"/>
<dbReference type="VEuPathDB" id="HostDB:ENSG00000118922"/>
<dbReference type="eggNOG" id="KOG1721">
    <property type="taxonomic scope" value="Eukaryota"/>
</dbReference>
<dbReference type="GeneTree" id="ENSGT00940000158108"/>
<dbReference type="InParanoid" id="Q9Y4X4"/>
<dbReference type="OMA" id="LNNAMML"/>
<dbReference type="OrthoDB" id="4748970at2759"/>
<dbReference type="PAN-GO" id="Q9Y4X4">
    <property type="GO annotations" value="3 GO annotations based on evolutionary models"/>
</dbReference>
<dbReference type="PhylomeDB" id="Q9Y4X4"/>
<dbReference type="TreeFam" id="TF350556"/>
<dbReference type="PathwayCommons" id="Q9Y4X4"/>
<dbReference type="SignaLink" id="Q9Y4X4"/>
<dbReference type="BioGRID-ORCS" id="11278">
    <property type="hits" value="9 hits in 1167 CRISPR screens"/>
</dbReference>
<dbReference type="ChiTaRS" id="KLF12">
    <property type="organism name" value="human"/>
</dbReference>
<dbReference type="GeneWiki" id="KLF12"/>
<dbReference type="GenomeRNAi" id="11278"/>
<dbReference type="Pharos" id="Q9Y4X4">
    <property type="development level" value="Tbio"/>
</dbReference>
<dbReference type="PRO" id="PR:Q9Y4X4"/>
<dbReference type="Proteomes" id="UP000005640">
    <property type="component" value="Chromosome 13"/>
</dbReference>
<dbReference type="RNAct" id="Q9Y4X4">
    <property type="molecule type" value="protein"/>
</dbReference>
<dbReference type="Bgee" id="ENSG00000118922">
    <property type="expression patterns" value="Expressed in corpus epididymis and 198 other cell types or tissues"/>
</dbReference>
<dbReference type="GO" id="GO:0000785">
    <property type="term" value="C:chromatin"/>
    <property type="evidence" value="ECO:0000247"/>
    <property type="project" value="NTNU_SB"/>
</dbReference>
<dbReference type="GO" id="GO:0005829">
    <property type="term" value="C:cytosol"/>
    <property type="evidence" value="ECO:0000314"/>
    <property type="project" value="HPA"/>
</dbReference>
<dbReference type="GO" id="GO:0005654">
    <property type="term" value="C:nucleoplasm"/>
    <property type="evidence" value="ECO:0000314"/>
    <property type="project" value="HPA"/>
</dbReference>
<dbReference type="GO" id="GO:0003677">
    <property type="term" value="F:DNA binding"/>
    <property type="evidence" value="ECO:0000314"/>
    <property type="project" value="MGI"/>
</dbReference>
<dbReference type="GO" id="GO:0003700">
    <property type="term" value="F:DNA-binding transcription factor activity"/>
    <property type="evidence" value="ECO:0000314"/>
    <property type="project" value="MGI"/>
</dbReference>
<dbReference type="GO" id="GO:0000981">
    <property type="term" value="F:DNA-binding transcription factor activity, RNA polymerase II-specific"/>
    <property type="evidence" value="ECO:0000247"/>
    <property type="project" value="NTNU_SB"/>
</dbReference>
<dbReference type="GO" id="GO:0001227">
    <property type="term" value="F:DNA-binding transcription repressor activity, RNA polymerase II-specific"/>
    <property type="evidence" value="ECO:0000314"/>
    <property type="project" value="ARUK-UCL"/>
</dbReference>
<dbReference type="GO" id="GO:0000978">
    <property type="term" value="F:RNA polymerase II cis-regulatory region sequence-specific DNA binding"/>
    <property type="evidence" value="ECO:0000314"/>
    <property type="project" value="ARUK-UCL"/>
</dbReference>
<dbReference type="GO" id="GO:1990837">
    <property type="term" value="F:sequence-specific double-stranded DNA binding"/>
    <property type="evidence" value="ECO:0000314"/>
    <property type="project" value="ARUK-UCL"/>
</dbReference>
<dbReference type="GO" id="GO:0008270">
    <property type="term" value="F:zinc ion binding"/>
    <property type="evidence" value="ECO:0007669"/>
    <property type="project" value="UniProtKB-KW"/>
</dbReference>
<dbReference type="GO" id="GO:0000122">
    <property type="term" value="P:negative regulation of transcription by RNA polymerase II"/>
    <property type="evidence" value="ECO:0000314"/>
    <property type="project" value="ARUK-UCL"/>
</dbReference>
<dbReference type="GO" id="GO:0045944">
    <property type="term" value="P:positive regulation of transcription by RNA polymerase II"/>
    <property type="evidence" value="ECO:0007669"/>
    <property type="project" value="Ensembl"/>
</dbReference>
<dbReference type="GO" id="GO:0006357">
    <property type="term" value="P:regulation of transcription by RNA polymerase II"/>
    <property type="evidence" value="ECO:0000318"/>
    <property type="project" value="GO_Central"/>
</dbReference>
<dbReference type="CDD" id="cd21441">
    <property type="entry name" value="KLF12_N"/>
    <property type="match status" value="1"/>
</dbReference>
<dbReference type="FunFam" id="3.30.160.60:FF:000021">
    <property type="entry name" value="Basic krueppel-like factor 3"/>
    <property type="match status" value="1"/>
</dbReference>
<dbReference type="FunFam" id="3.30.160.60:FF:000018">
    <property type="entry name" value="Krueppel-like factor 15"/>
    <property type="match status" value="1"/>
</dbReference>
<dbReference type="FunFam" id="3.30.160.60:FF:000563">
    <property type="entry name" value="Krueppel-like factor 8"/>
    <property type="match status" value="1"/>
</dbReference>
<dbReference type="Gene3D" id="3.30.160.60">
    <property type="entry name" value="Classic Zinc Finger"/>
    <property type="match status" value="3"/>
</dbReference>
<dbReference type="InterPro" id="IPR036236">
    <property type="entry name" value="Znf_C2H2_sf"/>
</dbReference>
<dbReference type="InterPro" id="IPR013087">
    <property type="entry name" value="Znf_C2H2_type"/>
</dbReference>
<dbReference type="PANTHER" id="PTHR23235:SF56">
    <property type="entry name" value="KRUEPPEL-LIKE FACTOR 12"/>
    <property type="match status" value="1"/>
</dbReference>
<dbReference type="PANTHER" id="PTHR23235">
    <property type="entry name" value="KRUEPPEL-LIKE TRANSCRIPTION FACTOR"/>
    <property type="match status" value="1"/>
</dbReference>
<dbReference type="Pfam" id="PF00096">
    <property type="entry name" value="zf-C2H2"/>
    <property type="match status" value="3"/>
</dbReference>
<dbReference type="SMART" id="SM00355">
    <property type="entry name" value="ZnF_C2H2"/>
    <property type="match status" value="3"/>
</dbReference>
<dbReference type="SUPFAM" id="SSF57667">
    <property type="entry name" value="beta-beta-alpha zinc fingers"/>
    <property type="match status" value="2"/>
</dbReference>
<dbReference type="PROSITE" id="PS00028">
    <property type="entry name" value="ZINC_FINGER_C2H2_1"/>
    <property type="match status" value="3"/>
</dbReference>
<dbReference type="PROSITE" id="PS50157">
    <property type="entry name" value="ZINC_FINGER_C2H2_2"/>
    <property type="match status" value="3"/>
</dbReference>
<feature type="chain" id="PRO_0000047182" description="Krueppel-like factor 12">
    <location>
        <begin position="1"/>
        <end position="402"/>
    </location>
</feature>
<feature type="zinc finger region" description="C2H2-type 1" evidence="1">
    <location>
        <begin position="317"/>
        <end position="341"/>
    </location>
</feature>
<feature type="zinc finger region" description="C2H2-type 2" evidence="1">
    <location>
        <begin position="347"/>
        <end position="371"/>
    </location>
</feature>
<feature type="zinc finger region" description="C2H2-type 3" evidence="1">
    <location>
        <begin position="377"/>
        <end position="399"/>
    </location>
</feature>
<feature type="region of interest" description="Disordered" evidence="2">
    <location>
        <begin position="79"/>
        <end position="125"/>
    </location>
</feature>
<feature type="region of interest" description="Disordered" evidence="2">
    <location>
        <begin position="217"/>
        <end position="254"/>
    </location>
</feature>
<feature type="region of interest" description="Disordered" evidence="2">
    <location>
        <begin position="268"/>
        <end position="314"/>
    </location>
</feature>
<feature type="short sequence motif" description="9aaTAD; inactive" evidence="4">
    <location>
        <begin position="80"/>
        <end position="88"/>
    </location>
</feature>
<feature type="compositionally biased region" description="Low complexity" evidence="2">
    <location>
        <begin position="91"/>
        <end position="125"/>
    </location>
</feature>
<feature type="compositionally biased region" description="Basic and acidic residues" evidence="2">
    <location>
        <begin position="217"/>
        <end position="226"/>
    </location>
</feature>
<feature type="compositionally biased region" description="Polar residues" evidence="2">
    <location>
        <begin position="282"/>
        <end position="298"/>
    </location>
</feature>
<feature type="compositionally biased region" description="Basic and acidic residues" evidence="2">
    <location>
        <begin position="299"/>
        <end position="311"/>
    </location>
</feature>
<feature type="modified residue" description="Phosphoserine" evidence="9 10">
    <location>
        <position position="202"/>
    </location>
</feature>
<feature type="modified residue" description="N6-methylated lysine; by EHMT2" evidence="3">
    <location>
        <position position="313"/>
    </location>
</feature>
<feature type="splice variant" id="VSP_006876" description="In isoform 2." evidence="5 7">
    <location>
        <begin position="270"/>
        <end position="402"/>
    </location>
</feature>
<feature type="splice variant" id="VSP_047486" description="In isoform 3." evidence="6">
    <original>CSISPFSIESTRRQRRSESP</original>
    <variation>WRETLQVYLGRLHLEVRSFR</variation>
    <location>
        <begin position="290"/>
        <end position="309"/>
    </location>
</feature>
<feature type="splice variant" id="VSP_047487" description="In isoform 3." evidence="6">
    <location>
        <begin position="310"/>
        <end position="402"/>
    </location>
</feature>
<feature type="sequence conflict" description="In Ref. 1; CAB46982 and 2; AAK12082." evidence="8" ref="1 2">
    <original>P</original>
    <variation>L</variation>
    <location>
        <position position="246"/>
    </location>
</feature>
<organism>
    <name type="scientific">Homo sapiens</name>
    <name type="common">Human</name>
    <dbReference type="NCBI Taxonomy" id="9606"/>
    <lineage>
        <taxon>Eukaryota</taxon>
        <taxon>Metazoa</taxon>
        <taxon>Chordata</taxon>
        <taxon>Craniata</taxon>
        <taxon>Vertebrata</taxon>
        <taxon>Euteleostomi</taxon>
        <taxon>Mammalia</taxon>
        <taxon>Eutheria</taxon>
        <taxon>Euarchontoglires</taxon>
        <taxon>Primates</taxon>
        <taxon>Haplorrhini</taxon>
        <taxon>Catarrhini</taxon>
        <taxon>Hominidae</taxon>
        <taxon>Homo</taxon>
    </lineage>
</organism>
<comment type="function">
    <text>Confers strong transcriptional repression to the AP-2-alpha gene. Binds to a regulatory element (A32) in the AP-2-alpha gene promoter.</text>
</comment>
<comment type="interaction">
    <interactant intactId="EBI-750750">
        <id>Q9Y4X4</id>
    </interactant>
    <interactant intactId="EBI-10171858">
        <id>Q13363-2</id>
        <label>CTBP1</label>
    </interactant>
    <organismsDiffer>false</organismsDiffer>
    <experiments>6</experiments>
</comment>
<comment type="interaction">
    <interactant intactId="EBI-750750">
        <id>Q9Y4X4</id>
    </interactant>
    <interactant intactId="EBI-744366">
        <id>Q96KQ7</id>
        <label>EHMT2</label>
    </interactant>
    <organismsDiffer>false</organismsDiffer>
    <experiments>5</experiments>
</comment>
<comment type="interaction">
    <interactant intactId="EBI-750750">
        <id>Q9Y4X4</id>
    </interactant>
    <interactant intactId="EBI-701903">
        <id>Q14192</id>
        <label>FHL2</label>
    </interactant>
    <organismsDiffer>false</organismsDiffer>
    <experiments>5</experiments>
</comment>
<comment type="interaction">
    <interactant intactId="EBI-750750">
        <id>Q9Y4X4</id>
    </interactant>
    <interactant intactId="EBI-741101">
        <id>Q13643</id>
        <label>FHL3</label>
    </interactant>
    <organismsDiffer>false</organismsDiffer>
    <experiments>3</experiments>
</comment>
<comment type="interaction">
    <interactant intactId="EBI-750750">
        <id>Q9Y4X4</id>
    </interactant>
    <interactant intactId="EBI-466029">
        <id>P42858</id>
        <label>HTT</label>
    </interactant>
    <organismsDiffer>false</organismsDiffer>
    <experiments>3</experiments>
</comment>
<comment type="interaction">
    <interactant intactId="EBI-750750">
        <id>Q9Y4X4</id>
    </interactant>
    <interactant intactId="EBI-399080">
        <id>Q92993</id>
        <label>KAT5</label>
    </interactant>
    <organismsDiffer>false</organismsDiffer>
    <experiments>3</experiments>
</comment>
<comment type="interaction">
    <interactant intactId="EBI-750750">
        <id>Q9Y4X4</id>
    </interactant>
    <interactant intactId="EBI-11742507">
        <id>Q8TAP4-4</id>
        <label>LMO3</label>
    </interactant>
    <organismsDiffer>false</organismsDiffer>
    <experiments>3</experiments>
</comment>
<comment type="interaction">
    <interactant intactId="EBI-750750">
        <id>Q9Y4X4</id>
    </interactant>
    <interactant intactId="EBI-50433196">
        <id>A0A6Q8PF08</id>
        <label>PMP22</label>
    </interactant>
    <organismsDiffer>false</organismsDiffer>
    <experiments>3</experiments>
</comment>
<comment type="interaction">
    <interactant intactId="EBI-750750">
        <id>Q9Y4X4</id>
    </interactant>
    <interactant intactId="EBI-359252">
        <id>P23284</id>
        <label>PPIB</label>
    </interactant>
    <organismsDiffer>false</organismsDiffer>
    <experiments>3</experiments>
</comment>
<comment type="interaction">
    <interactant intactId="EBI-750750">
        <id>Q9Y4X4</id>
    </interactant>
    <interactant intactId="EBI-9090795">
        <id>Q15047-2</id>
        <label>SETDB1</label>
    </interactant>
    <organismsDiffer>false</organismsDiffer>
    <experiments>3</experiments>
</comment>
<comment type="interaction">
    <interactant intactId="EBI-750750">
        <id>Q9Y4X4</id>
    </interactant>
    <interactant intactId="EBI-741515">
        <id>Q9NVV9</id>
        <label>THAP1</label>
    </interactant>
    <organismsDiffer>false</organismsDiffer>
    <experiments>3</experiments>
</comment>
<comment type="interaction">
    <interactant intactId="EBI-750750">
        <id>Q9Y4X4</id>
    </interactant>
    <interactant intactId="EBI-359832">
        <id>P61981</id>
        <label>YWHAG</label>
    </interactant>
    <organismsDiffer>false</organismsDiffer>
    <experiments>3</experiments>
</comment>
<comment type="subcellular location">
    <subcellularLocation>
        <location>Nucleus</location>
    </subcellularLocation>
</comment>
<comment type="alternative products">
    <event type="alternative splicing"/>
    <isoform>
        <id>Q9Y4X4-1</id>
        <name>1</name>
        <sequence type="displayed"/>
    </isoform>
    <isoform>
        <id>Q9Y4X4-2</id>
        <name>2</name>
        <sequence type="described" ref="VSP_006876"/>
    </isoform>
    <isoform>
        <id>Q9Y4X4-3</id>
        <name>3</name>
        <sequence type="described" ref="VSP_047486 VSP_047487"/>
    </isoform>
</comment>
<comment type="domain">
    <text evidence="4">The 9aaTAD motif is a transactivation domain present in a large number of yeast and animal transcription factors. In KLF12, the motif is inactive.</text>
</comment>
<comment type="similarity">
    <text evidence="8">Belongs to the Sp1 C2H2-type zinc-finger protein family.</text>
</comment>
<name>KLF12_HUMAN</name>
<sequence>MNIHMKRKTIKNINTFENRMLMLDGMPAVRVKTELLESEQGSPNVHNYPDMEAVPLLLNNVKGEPPEDSLSVDHFQTQTEPVDLSINKARTSPTAVSSSPVSMTASASSPSSTSTSSSSSSRLASSPTVITSVSSASSSSTVLTPGPLVASASGVGGQQFLHIIHPVPPSSPMNLQSNKLSHVHRIPVVVQSVPVVYTAVRSPGNVNNTIVVPLLEDGRGHGKAQMDPRGLSPRQSKSDSDDDDLPNVTLDSVNETGSTALSIARAVQEVHPSPVSRVRGNRMNNQKFPCSISPFSIESTRRQRRSESPDSRKRRIHRCDFEGCNKVYTKSSHLKAHRRTHTGEKPYKCTWEGCTWKFARSDELTRHYRKHTGVKPFKCADCDRSFSRSDHLALHRRRHMLV</sequence>
<reference key="1">
    <citation type="journal article" date="2000" name="Genomics">
        <title>Genomic structure and DNA binding properties of the human zinc finger transcriptional repressor AP-2rep (KLF12).</title>
        <authorList>
            <person name="Roth C."/>
            <person name="Schuierer M."/>
            <person name="Gunther K."/>
            <person name="Buettner R."/>
        </authorList>
    </citation>
    <scope>NUCLEOTIDE SEQUENCE [MRNA] (ISOFORM 1)</scope>
</reference>
<reference key="2">
    <citation type="journal article" date="2001" name="Genes Chromosomes Cancer">
        <title>Defining a common region of deletion at 13q21 in human cancers.</title>
        <authorList>
            <person name="Chen C."/>
            <person name="Brabham W.W."/>
            <person name="Stultz B.G."/>
            <person name="Frierson H.F. Jr."/>
            <person name="Barrett J.C."/>
            <person name="Sawyers C.L."/>
            <person name="Isaacs J.T."/>
            <person name="Dong J.T."/>
        </authorList>
    </citation>
    <scope>NUCLEOTIDE SEQUENCE [GENOMIC DNA]</scope>
</reference>
<reference key="3">
    <citation type="journal article" date="2013" name="FASEB J.">
        <title>Shaking the family tree: Identification of novel and biologically active alternatively spliced isoforms across the KLF family of transcription factors.</title>
        <authorList>
            <person name="Camacho-Vanegas O."/>
            <person name="Till J."/>
            <person name="Miranda-Lorenzo I."/>
            <person name="Ozturk B."/>
            <person name="Camacho S.C."/>
            <person name="Martignetti J.A."/>
        </authorList>
    </citation>
    <scope>NUCLEOTIDE SEQUENCE [MRNA] (ISOFORM 3)</scope>
    <scope>ALTERNATIVE SPLICING</scope>
</reference>
<reference key="4">
    <citation type="submission" date="1998-12" db="EMBL/GenBank/DDBJ databases">
        <title>A novel gene expressed in the human hypothalamus.</title>
        <authorList>
            <person name="Jiang C."/>
            <person name="Peng Y."/>
            <person name="Gu J."/>
            <person name="Gu Y."/>
            <person name="Fu S."/>
            <person name="Wu T."/>
            <person name="Dong H."/>
            <person name="Jin W."/>
            <person name="Fu G."/>
            <person name="Han Z."/>
            <person name="Chen Z."/>
            <person name="Wang Y."/>
        </authorList>
    </citation>
    <scope>NUCLEOTIDE SEQUENCE [MRNA] (ISOFORM 2)</scope>
    <source>
        <tissue>Hypothalamus</tissue>
    </source>
</reference>
<reference key="5">
    <citation type="journal article" date="2000" name="Genome Res.">
        <title>Cloning and functional analysis of cDNAs with open reading frames for 300 previously undefined genes expressed in CD34+ hematopoietic stem/progenitor cells.</title>
        <authorList>
            <person name="Zhang Q.-H."/>
            <person name="Ye M."/>
            <person name="Wu X.-Y."/>
            <person name="Ren S.-X."/>
            <person name="Zhao M."/>
            <person name="Zhao C.-J."/>
            <person name="Fu G."/>
            <person name="Shen Y."/>
            <person name="Fan H.-Y."/>
            <person name="Lu G."/>
            <person name="Zhong M."/>
            <person name="Xu X.-R."/>
            <person name="Han Z.-G."/>
            <person name="Zhang J.-W."/>
            <person name="Tao J."/>
            <person name="Huang Q.-H."/>
            <person name="Zhou J."/>
            <person name="Hu G.-X."/>
            <person name="Gu J."/>
            <person name="Chen S.-J."/>
            <person name="Chen Z."/>
        </authorList>
    </citation>
    <scope>NUCLEOTIDE SEQUENCE [LARGE SCALE MRNA] (ISOFORM 2)</scope>
    <source>
        <tissue>Umbilical cord blood</tissue>
    </source>
</reference>
<reference key="6">
    <citation type="journal article" date="2004" name="Nat. Genet.">
        <title>Complete sequencing and characterization of 21,243 full-length human cDNAs.</title>
        <authorList>
            <person name="Ota T."/>
            <person name="Suzuki Y."/>
            <person name="Nishikawa T."/>
            <person name="Otsuki T."/>
            <person name="Sugiyama T."/>
            <person name="Irie R."/>
            <person name="Wakamatsu A."/>
            <person name="Hayashi K."/>
            <person name="Sato H."/>
            <person name="Nagai K."/>
            <person name="Kimura K."/>
            <person name="Makita H."/>
            <person name="Sekine M."/>
            <person name="Obayashi M."/>
            <person name="Nishi T."/>
            <person name="Shibahara T."/>
            <person name="Tanaka T."/>
            <person name="Ishii S."/>
            <person name="Yamamoto J."/>
            <person name="Saito K."/>
            <person name="Kawai Y."/>
            <person name="Isono Y."/>
            <person name="Nakamura Y."/>
            <person name="Nagahari K."/>
            <person name="Murakami K."/>
            <person name="Yasuda T."/>
            <person name="Iwayanagi T."/>
            <person name="Wagatsuma M."/>
            <person name="Shiratori A."/>
            <person name="Sudo H."/>
            <person name="Hosoiri T."/>
            <person name="Kaku Y."/>
            <person name="Kodaira H."/>
            <person name="Kondo H."/>
            <person name="Sugawara M."/>
            <person name="Takahashi M."/>
            <person name="Kanda K."/>
            <person name="Yokoi T."/>
            <person name="Furuya T."/>
            <person name="Kikkawa E."/>
            <person name="Omura Y."/>
            <person name="Abe K."/>
            <person name="Kamihara K."/>
            <person name="Katsuta N."/>
            <person name="Sato K."/>
            <person name="Tanikawa M."/>
            <person name="Yamazaki M."/>
            <person name="Ninomiya K."/>
            <person name="Ishibashi T."/>
            <person name="Yamashita H."/>
            <person name="Murakawa K."/>
            <person name="Fujimori K."/>
            <person name="Tanai H."/>
            <person name="Kimata M."/>
            <person name="Watanabe M."/>
            <person name="Hiraoka S."/>
            <person name="Chiba Y."/>
            <person name="Ishida S."/>
            <person name="Ono Y."/>
            <person name="Takiguchi S."/>
            <person name="Watanabe S."/>
            <person name="Yosida M."/>
            <person name="Hotuta T."/>
            <person name="Kusano J."/>
            <person name="Kanehori K."/>
            <person name="Takahashi-Fujii A."/>
            <person name="Hara H."/>
            <person name="Tanase T.-O."/>
            <person name="Nomura Y."/>
            <person name="Togiya S."/>
            <person name="Komai F."/>
            <person name="Hara R."/>
            <person name="Takeuchi K."/>
            <person name="Arita M."/>
            <person name="Imose N."/>
            <person name="Musashino K."/>
            <person name="Yuuki H."/>
            <person name="Oshima A."/>
            <person name="Sasaki N."/>
            <person name="Aotsuka S."/>
            <person name="Yoshikawa Y."/>
            <person name="Matsunawa H."/>
            <person name="Ichihara T."/>
            <person name="Shiohata N."/>
            <person name="Sano S."/>
            <person name="Moriya S."/>
            <person name="Momiyama H."/>
            <person name="Satoh N."/>
            <person name="Takami S."/>
            <person name="Terashima Y."/>
            <person name="Suzuki O."/>
            <person name="Nakagawa S."/>
            <person name="Senoh A."/>
            <person name="Mizoguchi H."/>
            <person name="Goto Y."/>
            <person name="Shimizu F."/>
            <person name="Wakebe H."/>
            <person name="Hishigaki H."/>
            <person name="Watanabe T."/>
            <person name="Sugiyama A."/>
            <person name="Takemoto M."/>
            <person name="Kawakami B."/>
            <person name="Yamazaki M."/>
            <person name="Watanabe K."/>
            <person name="Kumagai A."/>
            <person name="Itakura S."/>
            <person name="Fukuzumi Y."/>
            <person name="Fujimori Y."/>
            <person name="Komiyama M."/>
            <person name="Tashiro H."/>
            <person name="Tanigami A."/>
            <person name="Fujiwara T."/>
            <person name="Ono T."/>
            <person name="Yamada K."/>
            <person name="Fujii Y."/>
            <person name="Ozaki K."/>
            <person name="Hirao M."/>
            <person name="Ohmori Y."/>
            <person name="Kawabata A."/>
            <person name="Hikiji T."/>
            <person name="Kobatake N."/>
            <person name="Inagaki H."/>
            <person name="Ikema Y."/>
            <person name="Okamoto S."/>
            <person name="Okitani R."/>
            <person name="Kawakami T."/>
            <person name="Noguchi S."/>
            <person name="Itoh T."/>
            <person name="Shigeta K."/>
            <person name="Senba T."/>
            <person name="Matsumura K."/>
            <person name="Nakajima Y."/>
            <person name="Mizuno T."/>
            <person name="Morinaga M."/>
            <person name="Sasaki M."/>
            <person name="Togashi T."/>
            <person name="Oyama M."/>
            <person name="Hata H."/>
            <person name="Watanabe M."/>
            <person name="Komatsu T."/>
            <person name="Mizushima-Sugano J."/>
            <person name="Satoh T."/>
            <person name="Shirai Y."/>
            <person name="Takahashi Y."/>
            <person name="Nakagawa K."/>
            <person name="Okumura K."/>
            <person name="Nagase T."/>
            <person name="Nomura N."/>
            <person name="Kikuchi H."/>
            <person name="Masuho Y."/>
            <person name="Yamashita R."/>
            <person name="Nakai K."/>
            <person name="Yada T."/>
            <person name="Nakamura Y."/>
            <person name="Ohara O."/>
            <person name="Isogai T."/>
            <person name="Sugano S."/>
        </authorList>
    </citation>
    <scope>NUCLEOTIDE SEQUENCE [LARGE SCALE MRNA] (ISOFORM 1)</scope>
    <source>
        <tissue>Brain</tissue>
    </source>
</reference>
<reference key="7">
    <citation type="journal article" date="2004" name="Nature">
        <title>The DNA sequence and analysis of human chromosome 13.</title>
        <authorList>
            <person name="Dunham A."/>
            <person name="Matthews L.H."/>
            <person name="Burton J."/>
            <person name="Ashurst J.L."/>
            <person name="Howe K.L."/>
            <person name="Ashcroft K.J."/>
            <person name="Beare D.M."/>
            <person name="Burford D.C."/>
            <person name="Hunt S.E."/>
            <person name="Griffiths-Jones S."/>
            <person name="Jones M.C."/>
            <person name="Keenan S.J."/>
            <person name="Oliver K."/>
            <person name="Scott C.E."/>
            <person name="Ainscough R."/>
            <person name="Almeida J.P."/>
            <person name="Ambrose K.D."/>
            <person name="Andrews D.T."/>
            <person name="Ashwell R.I.S."/>
            <person name="Babbage A.K."/>
            <person name="Bagguley C.L."/>
            <person name="Bailey J."/>
            <person name="Bannerjee R."/>
            <person name="Barlow K.F."/>
            <person name="Bates K."/>
            <person name="Beasley H."/>
            <person name="Bird C.P."/>
            <person name="Bray-Allen S."/>
            <person name="Brown A.J."/>
            <person name="Brown J.Y."/>
            <person name="Burrill W."/>
            <person name="Carder C."/>
            <person name="Carter N.P."/>
            <person name="Chapman J.C."/>
            <person name="Clamp M.E."/>
            <person name="Clark S.Y."/>
            <person name="Clarke G."/>
            <person name="Clee C.M."/>
            <person name="Clegg S.C."/>
            <person name="Cobley V."/>
            <person name="Collins J.E."/>
            <person name="Corby N."/>
            <person name="Coville G.J."/>
            <person name="Deloukas P."/>
            <person name="Dhami P."/>
            <person name="Dunham I."/>
            <person name="Dunn M."/>
            <person name="Earthrowl M.E."/>
            <person name="Ellington A.G."/>
            <person name="Faulkner L."/>
            <person name="Frankish A.G."/>
            <person name="Frankland J."/>
            <person name="French L."/>
            <person name="Garner P."/>
            <person name="Garnett J."/>
            <person name="Gilbert J.G.R."/>
            <person name="Gilson C.J."/>
            <person name="Ghori J."/>
            <person name="Grafham D.V."/>
            <person name="Gribble S.M."/>
            <person name="Griffiths C."/>
            <person name="Hall R.E."/>
            <person name="Hammond S."/>
            <person name="Harley J.L."/>
            <person name="Hart E.A."/>
            <person name="Heath P.D."/>
            <person name="Howden P.J."/>
            <person name="Huckle E.J."/>
            <person name="Hunt P.J."/>
            <person name="Hunt A.R."/>
            <person name="Johnson C."/>
            <person name="Johnson D."/>
            <person name="Kay M."/>
            <person name="Kimberley A.M."/>
            <person name="King A."/>
            <person name="Laird G.K."/>
            <person name="Langford C.J."/>
            <person name="Lawlor S."/>
            <person name="Leongamornlert D.A."/>
            <person name="Lloyd D.M."/>
            <person name="Lloyd C."/>
            <person name="Loveland J.E."/>
            <person name="Lovell J."/>
            <person name="Martin S."/>
            <person name="Mashreghi-Mohammadi M."/>
            <person name="McLaren S.J."/>
            <person name="McMurray A."/>
            <person name="Milne S."/>
            <person name="Moore M.J.F."/>
            <person name="Nickerson T."/>
            <person name="Palmer S.A."/>
            <person name="Pearce A.V."/>
            <person name="Peck A.I."/>
            <person name="Pelan S."/>
            <person name="Phillimore B."/>
            <person name="Porter K.M."/>
            <person name="Rice C.M."/>
            <person name="Searle S."/>
            <person name="Sehra H.K."/>
            <person name="Shownkeen R."/>
            <person name="Skuce C.D."/>
            <person name="Smith M."/>
            <person name="Steward C.A."/>
            <person name="Sycamore N."/>
            <person name="Tester J."/>
            <person name="Thomas D.W."/>
            <person name="Tracey A."/>
            <person name="Tromans A."/>
            <person name="Tubby B."/>
            <person name="Wall M."/>
            <person name="Wallis J.M."/>
            <person name="West A.P."/>
            <person name="Whitehead S.L."/>
            <person name="Willey D.L."/>
            <person name="Wilming L."/>
            <person name="Wray P.W."/>
            <person name="Wright M.W."/>
            <person name="Young L."/>
            <person name="Coulson A."/>
            <person name="Durbin R.M."/>
            <person name="Hubbard T."/>
            <person name="Sulston J.E."/>
            <person name="Beck S."/>
            <person name="Bentley D.R."/>
            <person name="Rogers J."/>
            <person name="Ross M.T."/>
        </authorList>
    </citation>
    <scope>NUCLEOTIDE SEQUENCE [LARGE SCALE GENOMIC DNA]</scope>
</reference>
<reference key="8">
    <citation type="submission" date="2005-07" db="EMBL/GenBank/DDBJ databases">
        <authorList>
            <person name="Mural R.J."/>
            <person name="Istrail S."/>
            <person name="Sutton G.G."/>
            <person name="Florea L."/>
            <person name="Halpern A.L."/>
            <person name="Mobarry C.M."/>
            <person name="Lippert R."/>
            <person name="Walenz B."/>
            <person name="Shatkay H."/>
            <person name="Dew I."/>
            <person name="Miller J.R."/>
            <person name="Flanigan M.J."/>
            <person name="Edwards N.J."/>
            <person name="Bolanos R."/>
            <person name="Fasulo D."/>
            <person name="Halldorsson B.V."/>
            <person name="Hannenhalli S."/>
            <person name="Turner R."/>
            <person name="Yooseph S."/>
            <person name="Lu F."/>
            <person name="Nusskern D.R."/>
            <person name="Shue B.C."/>
            <person name="Zheng X.H."/>
            <person name="Zhong F."/>
            <person name="Delcher A.L."/>
            <person name="Huson D.H."/>
            <person name="Kravitz S.A."/>
            <person name="Mouchard L."/>
            <person name="Reinert K."/>
            <person name="Remington K.A."/>
            <person name="Clark A.G."/>
            <person name="Waterman M.S."/>
            <person name="Eichler E.E."/>
            <person name="Adams M.D."/>
            <person name="Hunkapiller M.W."/>
            <person name="Myers E.W."/>
            <person name="Venter J.C."/>
        </authorList>
    </citation>
    <scope>NUCLEOTIDE SEQUENCE [LARGE SCALE GENOMIC DNA]</scope>
</reference>
<reference key="9">
    <citation type="journal article" date="2004" name="Genome Res.">
        <title>The status, quality, and expansion of the NIH full-length cDNA project: the Mammalian Gene Collection (MGC).</title>
        <authorList>
            <consortium name="The MGC Project Team"/>
        </authorList>
    </citation>
    <scope>NUCLEOTIDE SEQUENCE [LARGE SCALE MRNA] (ISOFORM 1)</scope>
    <source>
        <tissue>Brain</tissue>
    </source>
</reference>
<reference key="10">
    <citation type="journal article" date="2008" name="Nat. Chem. Biol.">
        <title>Protein lysine methyltransferase G9a acts on non-histone targets.</title>
        <authorList>
            <person name="Rathert P."/>
            <person name="Dhayalan A."/>
            <person name="Murakami M."/>
            <person name="Zhang X."/>
            <person name="Tamas R."/>
            <person name="Jurkowska R."/>
            <person name="Komatsu Y."/>
            <person name="Shinkai Y."/>
            <person name="Cheng X."/>
            <person name="Jeltsch A."/>
        </authorList>
    </citation>
    <scope>METHYLATION AT LYS-313</scope>
</reference>
<reference key="11">
    <citation type="journal article" date="2009" name="Sci. Signal.">
        <title>Quantitative phosphoproteomic analysis of T cell receptor signaling reveals system-wide modulation of protein-protein interactions.</title>
        <authorList>
            <person name="Mayya V."/>
            <person name="Lundgren D.H."/>
            <person name="Hwang S.-I."/>
            <person name="Rezaul K."/>
            <person name="Wu L."/>
            <person name="Eng J.K."/>
            <person name="Rodionov V."/>
            <person name="Han D.K."/>
        </authorList>
    </citation>
    <scope>PHOSPHORYLATION [LARGE SCALE ANALYSIS] AT SER-202</scope>
    <scope>IDENTIFICATION BY MASS SPECTROMETRY [LARGE SCALE ANALYSIS]</scope>
    <source>
        <tissue>Leukemic T-cell</tissue>
    </source>
</reference>
<reference key="12">
    <citation type="journal article" date="2011" name="Sci. Signal.">
        <title>System-wide temporal characterization of the proteome and phosphoproteome of human embryonic stem cell differentiation.</title>
        <authorList>
            <person name="Rigbolt K.T."/>
            <person name="Prokhorova T.A."/>
            <person name="Akimov V."/>
            <person name="Henningsen J."/>
            <person name="Johansen P.T."/>
            <person name="Kratchmarova I."/>
            <person name="Kassem M."/>
            <person name="Mann M."/>
            <person name="Olsen J.V."/>
            <person name="Blagoev B."/>
        </authorList>
    </citation>
    <scope>IDENTIFICATION BY MASS SPECTROMETRY [LARGE SCALE ANALYSIS]</scope>
</reference>
<reference key="13">
    <citation type="journal article" date="2013" name="J. Proteome Res.">
        <title>Toward a comprehensive characterization of a human cancer cell phosphoproteome.</title>
        <authorList>
            <person name="Zhou H."/>
            <person name="Di Palma S."/>
            <person name="Preisinger C."/>
            <person name="Peng M."/>
            <person name="Polat A.N."/>
            <person name="Heck A.J."/>
            <person name="Mohammed S."/>
        </authorList>
    </citation>
    <scope>PHOSPHORYLATION [LARGE SCALE ANALYSIS] AT SER-202</scope>
    <scope>IDENTIFICATION BY MASS SPECTROMETRY [LARGE SCALE ANALYSIS]</scope>
    <source>
        <tissue>Cervix carcinoma</tissue>
    </source>
</reference>
<reference key="14">
    <citation type="journal article" date="2020" name="Cell. Mol. Life Sci.">
        <title>The evolution of the 9aaTAD domain in Sp2 proteins: inactivation with valines and intron reservoirs.</title>
        <authorList>
            <person name="Piskacek M."/>
            <person name="Havelka M."/>
            <person name="Jendruchova K."/>
            <person name="Knight A."/>
            <person name="Keegan L.P."/>
        </authorList>
    </citation>
    <scope>INACTIVATION OF 9AATAD MOTIF</scope>
</reference>